<evidence type="ECO:0000255" key="1">
    <source>
        <dbReference type="HAMAP-Rule" id="MF_01249"/>
    </source>
</evidence>
<protein>
    <recommendedName>
        <fullName evidence="1">HPr kinase/phosphorylase</fullName>
        <shortName evidence="1">HPrK/P</shortName>
        <ecNumber evidence="1">2.7.11.-</ecNumber>
        <ecNumber evidence="1">2.7.4.-</ecNumber>
    </recommendedName>
    <alternativeName>
        <fullName evidence="1">HPr(Ser) kinase/phosphorylase</fullName>
    </alternativeName>
</protein>
<keyword id="KW-0067">ATP-binding</keyword>
<keyword id="KW-0119">Carbohydrate metabolism</keyword>
<keyword id="KW-0418">Kinase</keyword>
<keyword id="KW-0460">Magnesium</keyword>
<keyword id="KW-0479">Metal-binding</keyword>
<keyword id="KW-0511">Multifunctional enzyme</keyword>
<keyword id="KW-0547">Nucleotide-binding</keyword>
<keyword id="KW-0723">Serine/threonine-protein kinase</keyword>
<keyword id="KW-0808">Transferase</keyword>
<comment type="function">
    <text evidence="1">Catalyzes the ATP- as well as the pyrophosphate-dependent phosphorylation of a specific serine residue in HPr, a phosphocarrier protein of the phosphoenolpyruvate-dependent sugar phosphotransferase system (PTS). HprK/P also catalyzes the pyrophosphate-producing, inorganic phosphate-dependent dephosphorylation (phosphorolysis) of seryl-phosphorylated HPr (P-Ser-HPr). The two antagonistic activities of HprK/P are regulated by several intracellular metabolites, which change their concentration in response to the absence or presence of rapidly metabolisable carbon sources (glucose, fructose, etc.) in the growth medium. Therefore, by controlling the phosphorylation state of HPr, HPrK/P is a sensor enzyme that plays a major role in the regulation of carbon metabolism and sugar transport: it mediates carbon catabolite repression (CCR), and regulates PTS-catalyzed carbohydrate uptake and inducer exclusion.</text>
</comment>
<comment type="catalytic activity">
    <reaction evidence="1">
        <text>[HPr protein]-L-serine + ATP = [HPr protein]-O-phospho-L-serine + ADP + H(+)</text>
        <dbReference type="Rhea" id="RHEA:46600"/>
        <dbReference type="Rhea" id="RHEA-COMP:11602"/>
        <dbReference type="Rhea" id="RHEA-COMP:11603"/>
        <dbReference type="ChEBI" id="CHEBI:15378"/>
        <dbReference type="ChEBI" id="CHEBI:29999"/>
        <dbReference type="ChEBI" id="CHEBI:30616"/>
        <dbReference type="ChEBI" id="CHEBI:83421"/>
        <dbReference type="ChEBI" id="CHEBI:456216"/>
    </reaction>
</comment>
<comment type="catalytic activity">
    <reaction evidence="1">
        <text>[HPr protein]-O-phospho-L-serine + phosphate + H(+) = [HPr protein]-L-serine + diphosphate</text>
        <dbReference type="Rhea" id="RHEA:46604"/>
        <dbReference type="Rhea" id="RHEA-COMP:11602"/>
        <dbReference type="Rhea" id="RHEA-COMP:11603"/>
        <dbReference type="ChEBI" id="CHEBI:15378"/>
        <dbReference type="ChEBI" id="CHEBI:29999"/>
        <dbReference type="ChEBI" id="CHEBI:33019"/>
        <dbReference type="ChEBI" id="CHEBI:43474"/>
        <dbReference type="ChEBI" id="CHEBI:83421"/>
    </reaction>
</comment>
<comment type="cofactor">
    <cofactor evidence="1">
        <name>Mg(2+)</name>
        <dbReference type="ChEBI" id="CHEBI:18420"/>
    </cofactor>
</comment>
<comment type="subunit">
    <text evidence="1">Homohexamer.</text>
</comment>
<comment type="domain">
    <text evidence="1">The Walker A ATP-binding motif also binds Pi and PPi.</text>
</comment>
<comment type="miscellaneous">
    <text evidence="1">Both phosphorylation and phosphorolysis are carried out by the same active site and suggest a common mechanism for both reactions.</text>
</comment>
<comment type="similarity">
    <text evidence="1">Belongs to the HPrK/P family.</text>
</comment>
<proteinExistence type="inferred from homology"/>
<organism>
    <name type="scientific">Caldicellulosiruptor bescii (strain ATCC BAA-1888 / DSM 6725 / KCTC 15123 / Z-1320)</name>
    <name type="common">Anaerocellum thermophilum</name>
    <dbReference type="NCBI Taxonomy" id="521460"/>
    <lineage>
        <taxon>Bacteria</taxon>
        <taxon>Bacillati</taxon>
        <taxon>Bacillota</taxon>
        <taxon>Bacillota incertae sedis</taxon>
        <taxon>Caldicellulosiruptorales</taxon>
        <taxon>Caldicellulosiruptoraceae</taxon>
        <taxon>Caldicellulosiruptor</taxon>
    </lineage>
</organism>
<reference key="1">
    <citation type="submission" date="2009-01" db="EMBL/GenBank/DDBJ databases">
        <title>Complete sequence of chromosome of Caldicellulosiruptor becscii DSM 6725.</title>
        <authorList>
            <person name="Lucas S."/>
            <person name="Copeland A."/>
            <person name="Lapidus A."/>
            <person name="Glavina del Rio T."/>
            <person name="Tice H."/>
            <person name="Bruce D."/>
            <person name="Goodwin L."/>
            <person name="Pitluck S."/>
            <person name="Sims D."/>
            <person name="Meincke L."/>
            <person name="Brettin T."/>
            <person name="Detter J.C."/>
            <person name="Han C."/>
            <person name="Larimer F."/>
            <person name="Land M."/>
            <person name="Hauser L."/>
            <person name="Kyrpides N."/>
            <person name="Ovchinnikova G."/>
            <person name="Kataeva I."/>
            <person name="Adams M.W.W."/>
        </authorList>
    </citation>
    <scope>NUCLEOTIDE SEQUENCE [LARGE SCALE GENOMIC DNA]</scope>
    <source>
        <strain>ATCC BAA-1888 / DSM 6725 / KCTC 15123 / Z-1320</strain>
    </source>
</reference>
<name>HPRK_CALBD</name>
<accession>B9MN44</accession>
<dbReference type="EC" id="2.7.11.-" evidence="1"/>
<dbReference type="EC" id="2.7.4.-" evidence="1"/>
<dbReference type="EMBL" id="CP001393">
    <property type="protein sequence ID" value="ACM59500.1"/>
    <property type="molecule type" value="Genomic_DNA"/>
</dbReference>
<dbReference type="RefSeq" id="WP_015906965.1">
    <property type="nucleotide sequence ID" value="NC_012034.1"/>
</dbReference>
<dbReference type="SMR" id="B9MN44"/>
<dbReference type="STRING" id="521460.Athe_0364"/>
<dbReference type="GeneID" id="31771723"/>
<dbReference type="KEGG" id="ate:Athe_0364"/>
<dbReference type="eggNOG" id="COG1493">
    <property type="taxonomic scope" value="Bacteria"/>
</dbReference>
<dbReference type="HOGENOM" id="CLU_052030_0_1_9"/>
<dbReference type="Proteomes" id="UP000007723">
    <property type="component" value="Chromosome"/>
</dbReference>
<dbReference type="GO" id="GO:0005524">
    <property type="term" value="F:ATP binding"/>
    <property type="evidence" value="ECO:0007669"/>
    <property type="project" value="UniProtKB-UniRule"/>
</dbReference>
<dbReference type="GO" id="GO:0000287">
    <property type="term" value="F:magnesium ion binding"/>
    <property type="evidence" value="ECO:0007669"/>
    <property type="project" value="UniProtKB-UniRule"/>
</dbReference>
<dbReference type="GO" id="GO:0000155">
    <property type="term" value="F:phosphorelay sensor kinase activity"/>
    <property type="evidence" value="ECO:0007669"/>
    <property type="project" value="InterPro"/>
</dbReference>
<dbReference type="GO" id="GO:0004674">
    <property type="term" value="F:protein serine/threonine kinase activity"/>
    <property type="evidence" value="ECO:0007669"/>
    <property type="project" value="UniProtKB-KW"/>
</dbReference>
<dbReference type="GO" id="GO:0004712">
    <property type="term" value="F:protein serine/threonine/tyrosine kinase activity"/>
    <property type="evidence" value="ECO:0007669"/>
    <property type="project" value="UniProtKB-UniRule"/>
</dbReference>
<dbReference type="GO" id="GO:0006109">
    <property type="term" value="P:regulation of carbohydrate metabolic process"/>
    <property type="evidence" value="ECO:0007669"/>
    <property type="project" value="UniProtKB-UniRule"/>
</dbReference>
<dbReference type="CDD" id="cd01918">
    <property type="entry name" value="HprK_C"/>
    <property type="match status" value="1"/>
</dbReference>
<dbReference type="FunFam" id="3.40.50.300:FF:000174">
    <property type="entry name" value="HPr kinase/phosphorylase"/>
    <property type="match status" value="1"/>
</dbReference>
<dbReference type="Gene3D" id="3.40.1390.20">
    <property type="entry name" value="HprK N-terminal domain-like"/>
    <property type="match status" value="1"/>
</dbReference>
<dbReference type="Gene3D" id="3.40.50.300">
    <property type="entry name" value="P-loop containing nucleotide triphosphate hydrolases"/>
    <property type="match status" value="1"/>
</dbReference>
<dbReference type="HAMAP" id="MF_01249">
    <property type="entry name" value="HPr_kinase"/>
    <property type="match status" value="1"/>
</dbReference>
<dbReference type="InterPro" id="IPR003755">
    <property type="entry name" value="HPr(Ser)_kin/Pase"/>
</dbReference>
<dbReference type="InterPro" id="IPR011104">
    <property type="entry name" value="Hpr_kin/Pase_C"/>
</dbReference>
<dbReference type="InterPro" id="IPR011126">
    <property type="entry name" value="Hpr_kin/Pase_Hpr_N"/>
</dbReference>
<dbReference type="InterPro" id="IPR027417">
    <property type="entry name" value="P-loop_NTPase"/>
</dbReference>
<dbReference type="InterPro" id="IPR028979">
    <property type="entry name" value="Ser_kin/Pase_Hpr-like_N_sf"/>
</dbReference>
<dbReference type="NCBIfam" id="TIGR00679">
    <property type="entry name" value="hpr-ser"/>
    <property type="match status" value="1"/>
</dbReference>
<dbReference type="PANTHER" id="PTHR30305:SF1">
    <property type="entry name" value="HPR KINASE_PHOSPHORYLASE"/>
    <property type="match status" value="1"/>
</dbReference>
<dbReference type="PANTHER" id="PTHR30305">
    <property type="entry name" value="PROTEIN YJDM-RELATED"/>
    <property type="match status" value="1"/>
</dbReference>
<dbReference type="Pfam" id="PF07475">
    <property type="entry name" value="Hpr_kinase_C"/>
    <property type="match status" value="1"/>
</dbReference>
<dbReference type="Pfam" id="PF02603">
    <property type="entry name" value="Hpr_kinase_N"/>
    <property type="match status" value="1"/>
</dbReference>
<dbReference type="SUPFAM" id="SSF75138">
    <property type="entry name" value="HprK N-terminal domain-like"/>
    <property type="match status" value="1"/>
</dbReference>
<dbReference type="SUPFAM" id="SSF53795">
    <property type="entry name" value="PEP carboxykinase-like"/>
    <property type="match status" value="1"/>
</dbReference>
<sequence length="311" mass="35347">MFYTTVGKIIKELNLECLTEISGIEERKIKDMNLNRPALQLMGFFEYFDEQRVQIIGISEMAYLKTMTPSQRRDAIERLFQRNIPCVIITSNQEPFEEFLEFSKKYGVPLLRTQEVTTRFMTNLSTFLTHELAPRITRHGTLVNVYGEGVLMLGESGVGKSETALELVKRGHILVADDAVEIRKVSEKTLVGEAPEIIRHLIEIRGIGILDVKNLFGVGCVKESERIDLVIQLETWKQGKEYERLGLHDQYIEILGIKVPTLVIPVRPGRNLAIIVEVAAMNNRQKKMGYNAAKALTERLQKQMSRGNGAE</sequence>
<gene>
    <name evidence="1" type="primary">hprK</name>
    <name type="ordered locus">Athe_0364</name>
</gene>
<feature type="chain" id="PRO_1000165065" description="HPr kinase/phosphorylase">
    <location>
        <begin position="1"/>
        <end position="311"/>
    </location>
</feature>
<feature type="region of interest" description="Important for the catalytic mechanism of both phosphorylation and dephosphorylation" evidence="1">
    <location>
        <begin position="202"/>
        <end position="211"/>
    </location>
</feature>
<feature type="region of interest" description="Important for the catalytic mechanism of dephosphorylation" evidence="1">
    <location>
        <begin position="265"/>
        <end position="270"/>
    </location>
</feature>
<feature type="active site" evidence="1">
    <location>
        <position position="139"/>
    </location>
</feature>
<feature type="active site" evidence="1">
    <location>
        <position position="160"/>
    </location>
</feature>
<feature type="active site" description="Proton acceptor; for phosphorylation activity. Proton donor; for dephosphorylation activity" evidence="1">
    <location>
        <position position="178"/>
    </location>
</feature>
<feature type="active site" evidence="1">
    <location>
        <position position="244"/>
    </location>
</feature>
<feature type="binding site" evidence="1">
    <location>
        <begin position="154"/>
        <end position="161"/>
    </location>
    <ligand>
        <name>ATP</name>
        <dbReference type="ChEBI" id="CHEBI:30616"/>
    </ligand>
</feature>
<feature type="binding site" evidence="1">
    <location>
        <position position="161"/>
    </location>
    <ligand>
        <name>Mg(2+)</name>
        <dbReference type="ChEBI" id="CHEBI:18420"/>
    </ligand>
</feature>
<feature type="binding site" evidence="1">
    <location>
        <position position="203"/>
    </location>
    <ligand>
        <name>Mg(2+)</name>
        <dbReference type="ChEBI" id="CHEBI:18420"/>
    </ligand>
</feature>